<organism>
    <name type="scientific">Escherichia coli (strain SMS-3-5 / SECEC)</name>
    <dbReference type="NCBI Taxonomy" id="439855"/>
    <lineage>
        <taxon>Bacteria</taxon>
        <taxon>Pseudomonadati</taxon>
        <taxon>Pseudomonadota</taxon>
        <taxon>Gammaproteobacteria</taxon>
        <taxon>Enterobacterales</taxon>
        <taxon>Enterobacteriaceae</taxon>
        <taxon>Escherichia</taxon>
    </lineage>
</organism>
<protein>
    <recommendedName>
        <fullName evidence="1">Ribosomal RNA small subunit methyltransferase B</fullName>
        <ecNumber evidence="1">2.1.1.176</ecNumber>
    </recommendedName>
    <alternativeName>
        <fullName evidence="1">16S rRNA m5C967 methyltransferase</fullName>
    </alternativeName>
    <alternativeName>
        <fullName evidence="1">rRNA (cytosine-C(5)-)-methyltransferase RsmB</fullName>
    </alternativeName>
</protein>
<keyword id="KW-0963">Cytoplasm</keyword>
<keyword id="KW-0489">Methyltransferase</keyword>
<keyword id="KW-0694">RNA-binding</keyword>
<keyword id="KW-0698">rRNA processing</keyword>
<keyword id="KW-0949">S-adenosyl-L-methionine</keyword>
<keyword id="KW-0808">Transferase</keyword>
<reference key="1">
    <citation type="journal article" date="2008" name="J. Bacteriol.">
        <title>Insights into the environmental resistance gene pool from the genome sequence of the multidrug-resistant environmental isolate Escherichia coli SMS-3-5.</title>
        <authorList>
            <person name="Fricke W.F."/>
            <person name="Wright M.S."/>
            <person name="Lindell A.H."/>
            <person name="Harkins D.M."/>
            <person name="Baker-Austin C."/>
            <person name="Ravel J."/>
            <person name="Stepanauskas R."/>
        </authorList>
    </citation>
    <scope>NUCLEOTIDE SEQUENCE [LARGE SCALE GENOMIC DNA]</scope>
    <source>
        <strain>SMS-3-5 / SECEC</strain>
    </source>
</reference>
<comment type="function">
    <text evidence="1">Specifically methylates the cytosine at position 967 (m5C967) of 16S rRNA.</text>
</comment>
<comment type="catalytic activity">
    <reaction evidence="1">
        <text>cytidine(967) in 16S rRNA + S-adenosyl-L-methionine = 5-methylcytidine(967) in 16S rRNA + S-adenosyl-L-homocysteine + H(+)</text>
        <dbReference type="Rhea" id="RHEA:42748"/>
        <dbReference type="Rhea" id="RHEA-COMP:10219"/>
        <dbReference type="Rhea" id="RHEA-COMP:10220"/>
        <dbReference type="ChEBI" id="CHEBI:15378"/>
        <dbReference type="ChEBI" id="CHEBI:57856"/>
        <dbReference type="ChEBI" id="CHEBI:59789"/>
        <dbReference type="ChEBI" id="CHEBI:74483"/>
        <dbReference type="ChEBI" id="CHEBI:82748"/>
        <dbReference type="EC" id="2.1.1.176"/>
    </reaction>
</comment>
<comment type="subcellular location">
    <subcellularLocation>
        <location evidence="1">Cytoplasm</location>
    </subcellularLocation>
</comment>
<comment type="similarity">
    <text evidence="1">Belongs to the class I-like SAM-binding methyltransferase superfamily. RsmB/NOP family.</text>
</comment>
<proteinExistence type="inferred from homology"/>
<sequence>MKKQRNLRSMAAQAVEQVVEQGQSLSNILPPLQQKVSDKDKALLQELCFGVLRTLSQLDWLINKLMARPMTGKQRTVHYLIMVGLYQLLYTRIPPHAALAETVEGAIAIKRPQLKGLINGVLRQFQRQQEELLAEFNASDARYLHPSWLLKRLQKAYPEQWQSIVEANNQRPPMWLRVNRTHHSRDRWLALLDEAGMKGFPHADYPDAVRLETPAPVHALPGFEDGWVTVQDASAQGCMTWLAPQNGEHILDLCAAPGGKTTHILEVAPEAQVVAVDIDEQRLSRVYDNLKRLGMKATVKQGDGRYPSQWCGEQQFDRILLDAPCSATGVIRRHPDIKWLRRDRDIPELAQLQSEILDAIWPHLKSGGTLVYATCSVLPEENSLQIKAFLQRTADAELCETGTPEQPGKQNLPGAEEGDGFFYAKLIKK</sequence>
<feature type="chain" id="PRO_0000366153" description="Ribosomal RNA small subunit methyltransferase B">
    <location>
        <begin position="1"/>
        <end position="429"/>
    </location>
</feature>
<feature type="active site" description="Nucleophile" evidence="1">
    <location>
        <position position="375"/>
    </location>
</feature>
<feature type="binding site" evidence="1">
    <location>
        <begin position="254"/>
        <end position="260"/>
    </location>
    <ligand>
        <name>S-adenosyl-L-methionine</name>
        <dbReference type="ChEBI" id="CHEBI:59789"/>
    </ligand>
</feature>
<feature type="binding site" evidence="1">
    <location>
        <position position="277"/>
    </location>
    <ligand>
        <name>S-adenosyl-L-methionine</name>
        <dbReference type="ChEBI" id="CHEBI:59789"/>
    </ligand>
</feature>
<feature type="binding site" evidence="1">
    <location>
        <position position="303"/>
    </location>
    <ligand>
        <name>S-adenosyl-L-methionine</name>
        <dbReference type="ChEBI" id="CHEBI:59789"/>
    </ligand>
</feature>
<feature type="binding site" evidence="1">
    <location>
        <position position="322"/>
    </location>
    <ligand>
        <name>S-adenosyl-L-methionine</name>
        <dbReference type="ChEBI" id="CHEBI:59789"/>
    </ligand>
</feature>
<accession>B1LGP5</accession>
<evidence type="ECO:0000255" key="1">
    <source>
        <dbReference type="HAMAP-Rule" id="MF_01856"/>
    </source>
</evidence>
<dbReference type="EC" id="2.1.1.176" evidence="1"/>
<dbReference type="EMBL" id="CP000970">
    <property type="protein sequence ID" value="ACB19996.1"/>
    <property type="molecule type" value="Genomic_DNA"/>
</dbReference>
<dbReference type="RefSeq" id="WP_012311980.1">
    <property type="nucleotide sequence ID" value="NC_010498.1"/>
</dbReference>
<dbReference type="SMR" id="B1LGP5"/>
<dbReference type="KEGG" id="ecm:EcSMS35_3584"/>
<dbReference type="HOGENOM" id="CLU_005316_0_4_6"/>
<dbReference type="Proteomes" id="UP000007011">
    <property type="component" value="Chromosome"/>
</dbReference>
<dbReference type="GO" id="GO:0005829">
    <property type="term" value="C:cytosol"/>
    <property type="evidence" value="ECO:0007669"/>
    <property type="project" value="TreeGrafter"/>
</dbReference>
<dbReference type="GO" id="GO:0003723">
    <property type="term" value="F:RNA binding"/>
    <property type="evidence" value="ECO:0007669"/>
    <property type="project" value="UniProtKB-KW"/>
</dbReference>
<dbReference type="GO" id="GO:0009383">
    <property type="term" value="F:rRNA (cytosine-C5-)-methyltransferase activity"/>
    <property type="evidence" value="ECO:0007669"/>
    <property type="project" value="TreeGrafter"/>
</dbReference>
<dbReference type="GO" id="GO:0006355">
    <property type="term" value="P:regulation of DNA-templated transcription"/>
    <property type="evidence" value="ECO:0007669"/>
    <property type="project" value="InterPro"/>
</dbReference>
<dbReference type="GO" id="GO:0070475">
    <property type="term" value="P:rRNA base methylation"/>
    <property type="evidence" value="ECO:0007669"/>
    <property type="project" value="TreeGrafter"/>
</dbReference>
<dbReference type="CDD" id="cd02440">
    <property type="entry name" value="AdoMet_MTases"/>
    <property type="match status" value="1"/>
</dbReference>
<dbReference type="CDD" id="cd00620">
    <property type="entry name" value="Methyltransferase_Sun"/>
    <property type="match status" value="1"/>
</dbReference>
<dbReference type="FunFam" id="1.10.287.730:FF:000001">
    <property type="entry name" value="Ribosomal RNA small subunit methyltransferase B"/>
    <property type="match status" value="1"/>
</dbReference>
<dbReference type="FunFam" id="1.10.940.10:FF:000002">
    <property type="entry name" value="Ribosomal RNA small subunit methyltransferase B"/>
    <property type="match status" value="1"/>
</dbReference>
<dbReference type="FunFam" id="3.30.70.1170:FF:000002">
    <property type="entry name" value="Ribosomal RNA small subunit methyltransferase B"/>
    <property type="match status" value="1"/>
</dbReference>
<dbReference type="FunFam" id="3.40.50.150:FF:000022">
    <property type="entry name" value="Ribosomal RNA small subunit methyltransferase B"/>
    <property type="match status" value="1"/>
</dbReference>
<dbReference type="Gene3D" id="1.10.287.730">
    <property type="entry name" value="Helix hairpin bin"/>
    <property type="match status" value="1"/>
</dbReference>
<dbReference type="Gene3D" id="1.10.940.10">
    <property type="entry name" value="NusB-like"/>
    <property type="match status" value="1"/>
</dbReference>
<dbReference type="Gene3D" id="3.30.70.1170">
    <property type="entry name" value="Sun protein, domain 3"/>
    <property type="match status" value="1"/>
</dbReference>
<dbReference type="Gene3D" id="3.40.50.150">
    <property type="entry name" value="Vaccinia Virus protein VP39"/>
    <property type="match status" value="1"/>
</dbReference>
<dbReference type="HAMAP" id="MF_01856">
    <property type="entry name" value="16SrRNA_methyltr_B"/>
    <property type="match status" value="1"/>
</dbReference>
<dbReference type="InterPro" id="IPR049560">
    <property type="entry name" value="MeTrfase_RsmB-F_NOP2_cat"/>
</dbReference>
<dbReference type="InterPro" id="IPR001678">
    <property type="entry name" value="MeTrfase_RsmB-F_NOP2_dom"/>
</dbReference>
<dbReference type="InterPro" id="IPR035926">
    <property type="entry name" value="NusB-like_sf"/>
</dbReference>
<dbReference type="InterPro" id="IPR006027">
    <property type="entry name" value="NusB_RsmB_TIM44"/>
</dbReference>
<dbReference type="InterPro" id="IPR023267">
    <property type="entry name" value="RCMT"/>
</dbReference>
<dbReference type="InterPro" id="IPR004573">
    <property type="entry name" value="rRNA_ssu_MeTfrase_B"/>
</dbReference>
<dbReference type="InterPro" id="IPR023541">
    <property type="entry name" value="rRNA_ssu_MeTfrase_B_ent"/>
</dbReference>
<dbReference type="InterPro" id="IPR054728">
    <property type="entry name" value="RsmB-like_ferredoxin"/>
</dbReference>
<dbReference type="InterPro" id="IPR048019">
    <property type="entry name" value="RsmB-like_N"/>
</dbReference>
<dbReference type="InterPro" id="IPR018314">
    <property type="entry name" value="RsmB/NOL1/NOP2-like_CS"/>
</dbReference>
<dbReference type="InterPro" id="IPR029063">
    <property type="entry name" value="SAM-dependent_MTases_sf"/>
</dbReference>
<dbReference type="NCBIfam" id="NF008149">
    <property type="entry name" value="PRK10901.1"/>
    <property type="match status" value="1"/>
</dbReference>
<dbReference type="NCBIfam" id="NF011494">
    <property type="entry name" value="PRK14902.1"/>
    <property type="match status" value="1"/>
</dbReference>
<dbReference type="NCBIfam" id="TIGR00563">
    <property type="entry name" value="rsmB"/>
    <property type="match status" value="1"/>
</dbReference>
<dbReference type="PANTHER" id="PTHR22807:SF61">
    <property type="entry name" value="NOL1_NOP2_SUN FAMILY PROTEIN _ ANTITERMINATION NUSB DOMAIN-CONTAINING PROTEIN"/>
    <property type="match status" value="1"/>
</dbReference>
<dbReference type="PANTHER" id="PTHR22807">
    <property type="entry name" value="NOP2 YEAST -RELATED NOL1/NOP2/FMU SUN DOMAIN-CONTAINING"/>
    <property type="match status" value="1"/>
</dbReference>
<dbReference type="Pfam" id="PF01189">
    <property type="entry name" value="Methyltr_RsmB-F"/>
    <property type="match status" value="1"/>
</dbReference>
<dbReference type="Pfam" id="PF01029">
    <property type="entry name" value="NusB"/>
    <property type="match status" value="1"/>
</dbReference>
<dbReference type="Pfam" id="PF22458">
    <property type="entry name" value="RsmF-B_ferredox"/>
    <property type="match status" value="1"/>
</dbReference>
<dbReference type="PRINTS" id="PR02008">
    <property type="entry name" value="RCMTFAMILY"/>
</dbReference>
<dbReference type="SUPFAM" id="SSF48013">
    <property type="entry name" value="NusB-like"/>
    <property type="match status" value="1"/>
</dbReference>
<dbReference type="SUPFAM" id="SSF53335">
    <property type="entry name" value="S-adenosyl-L-methionine-dependent methyltransferases"/>
    <property type="match status" value="1"/>
</dbReference>
<dbReference type="PROSITE" id="PS01153">
    <property type="entry name" value="NOL1_NOP2_SUN"/>
    <property type="match status" value="1"/>
</dbReference>
<dbReference type="PROSITE" id="PS51686">
    <property type="entry name" value="SAM_MT_RSMB_NOP"/>
    <property type="match status" value="1"/>
</dbReference>
<gene>
    <name evidence="1" type="primary">rsmB</name>
    <name evidence="1" type="synonym">sun</name>
    <name type="ordered locus">EcSMS35_3584</name>
</gene>
<name>RSMB_ECOSM</name>